<organism>
    <name type="scientific">Alkaliphilus oremlandii (strain OhILAs)</name>
    <name type="common">Clostridium oremlandii (strain OhILAs)</name>
    <dbReference type="NCBI Taxonomy" id="350688"/>
    <lineage>
        <taxon>Bacteria</taxon>
        <taxon>Bacillati</taxon>
        <taxon>Bacillota</taxon>
        <taxon>Clostridia</taxon>
        <taxon>Peptostreptococcales</taxon>
        <taxon>Natronincolaceae</taxon>
        <taxon>Alkaliphilus</taxon>
    </lineage>
</organism>
<accession>A8MFB4</accession>
<gene>
    <name evidence="1" type="primary">pnp</name>
    <name type="ordered locus">Clos_1534</name>
</gene>
<protein>
    <recommendedName>
        <fullName evidence="1">Polyribonucleotide nucleotidyltransferase</fullName>
        <ecNumber evidence="1">2.7.7.8</ecNumber>
    </recommendedName>
    <alternativeName>
        <fullName evidence="1">Polynucleotide phosphorylase</fullName>
        <shortName evidence="1">PNPase</shortName>
    </alternativeName>
</protein>
<dbReference type="EC" id="2.7.7.8" evidence="1"/>
<dbReference type="EMBL" id="CP000853">
    <property type="protein sequence ID" value="ABW19077.1"/>
    <property type="molecule type" value="Genomic_DNA"/>
</dbReference>
<dbReference type="RefSeq" id="WP_012159389.1">
    <property type="nucleotide sequence ID" value="NC_009922.1"/>
</dbReference>
<dbReference type="SMR" id="A8MFB4"/>
<dbReference type="STRING" id="350688.Clos_1534"/>
<dbReference type="KEGG" id="aoe:Clos_1534"/>
<dbReference type="eggNOG" id="COG1185">
    <property type="taxonomic scope" value="Bacteria"/>
</dbReference>
<dbReference type="HOGENOM" id="CLU_004217_2_2_9"/>
<dbReference type="OrthoDB" id="9804305at2"/>
<dbReference type="Proteomes" id="UP000000269">
    <property type="component" value="Chromosome"/>
</dbReference>
<dbReference type="GO" id="GO:0005829">
    <property type="term" value="C:cytosol"/>
    <property type="evidence" value="ECO:0007669"/>
    <property type="project" value="TreeGrafter"/>
</dbReference>
<dbReference type="GO" id="GO:0000175">
    <property type="term" value="F:3'-5'-RNA exonuclease activity"/>
    <property type="evidence" value="ECO:0007669"/>
    <property type="project" value="TreeGrafter"/>
</dbReference>
<dbReference type="GO" id="GO:0000287">
    <property type="term" value="F:magnesium ion binding"/>
    <property type="evidence" value="ECO:0007669"/>
    <property type="project" value="UniProtKB-UniRule"/>
</dbReference>
<dbReference type="GO" id="GO:0004654">
    <property type="term" value="F:polyribonucleotide nucleotidyltransferase activity"/>
    <property type="evidence" value="ECO:0007669"/>
    <property type="project" value="UniProtKB-UniRule"/>
</dbReference>
<dbReference type="GO" id="GO:0003723">
    <property type="term" value="F:RNA binding"/>
    <property type="evidence" value="ECO:0007669"/>
    <property type="project" value="UniProtKB-UniRule"/>
</dbReference>
<dbReference type="GO" id="GO:0006402">
    <property type="term" value="P:mRNA catabolic process"/>
    <property type="evidence" value="ECO:0007669"/>
    <property type="project" value="UniProtKB-UniRule"/>
</dbReference>
<dbReference type="GO" id="GO:0006396">
    <property type="term" value="P:RNA processing"/>
    <property type="evidence" value="ECO:0007669"/>
    <property type="project" value="InterPro"/>
</dbReference>
<dbReference type="CDD" id="cd02393">
    <property type="entry name" value="KH-I_PNPase"/>
    <property type="match status" value="1"/>
</dbReference>
<dbReference type="CDD" id="cd11363">
    <property type="entry name" value="RNase_PH_PNPase_1"/>
    <property type="match status" value="1"/>
</dbReference>
<dbReference type="CDD" id="cd11364">
    <property type="entry name" value="RNase_PH_PNPase_2"/>
    <property type="match status" value="1"/>
</dbReference>
<dbReference type="CDD" id="cd04472">
    <property type="entry name" value="S1_PNPase"/>
    <property type="match status" value="1"/>
</dbReference>
<dbReference type="FunFam" id="2.40.50.140:FF:000023">
    <property type="entry name" value="Polyribonucleotide nucleotidyltransferase"/>
    <property type="match status" value="1"/>
</dbReference>
<dbReference type="FunFam" id="3.30.1370.10:FF:000001">
    <property type="entry name" value="Polyribonucleotide nucleotidyltransferase"/>
    <property type="match status" value="1"/>
</dbReference>
<dbReference type="FunFam" id="3.30.230.70:FF:000001">
    <property type="entry name" value="Polyribonucleotide nucleotidyltransferase"/>
    <property type="match status" value="1"/>
</dbReference>
<dbReference type="FunFam" id="3.30.230.70:FF:000002">
    <property type="entry name" value="Polyribonucleotide nucleotidyltransferase"/>
    <property type="match status" value="1"/>
</dbReference>
<dbReference type="Gene3D" id="3.30.230.70">
    <property type="entry name" value="GHMP Kinase, N-terminal domain"/>
    <property type="match status" value="2"/>
</dbReference>
<dbReference type="Gene3D" id="3.30.1370.10">
    <property type="entry name" value="K Homology domain, type 1"/>
    <property type="match status" value="1"/>
</dbReference>
<dbReference type="Gene3D" id="2.40.50.140">
    <property type="entry name" value="Nucleic acid-binding proteins"/>
    <property type="match status" value="1"/>
</dbReference>
<dbReference type="HAMAP" id="MF_01595">
    <property type="entry name" value="PNPase"/>
    <property type="match status" value="1"/>
</dbReference>
<dbReference type="InterPro" id="IPR001247">
    <property type="entry name" value="ExoRNase_PH_dom1"/>
</dbReference>
<dbReference type="InterPro" id="IPR015847">
    <property type="entry name" value="ExoRNase_PH_dom2"/>
</dbReference>
<dbReference type="InterPro" id="IPR036345">
    <property type="entry name" value="ExoRNase_PH_dom2_sf"/>
</dbReference>
<dbReference type="InterPro" id="IPR004087">
    <property type="entry name" value="KH_dom"/>
</dbReference>
<dbReference type="InterPro" id="IPR004088">
    <property type="entry name" value="KH_dom_type_1"/>
</dbReference>
<dbReference type="InterPro" id="IPR036612">
    <property type="entry name" value="KH_dom_type_1_sf"/>
</dbReference>
<dbReference type="InterPro" id="IPR012340">
    <property type="entry name" value="NA-bd_OB-fold"/>
</dbReference>
<dbReference type="InterPro" id="IPR012162">
    <property type="entry name" value="PNPase"/>
</dbReference>
<dbReference type="InterPro" id="IPR027408">
    <property type="entry name" value="PNPase/RNase_PH_dom_sf"/>
</dbReference>
<dbReference type="InterPro" id="IPR015848">
    <property type="entry name" value="PNPase_PH_RNA-bd_bac/org-type"/>
</dbReference>
<dbReference type="InterPro" id="IPR020568">
    <property type="entry name" value="Ribosomal_Su5_D2-typ_SF"/>
</dbReference>
<dbReference type="InterPro" id="IPR003029">
    <property type="entry name" value="S1_domain"/>
</dbReference>
<dbReference type="NCBIfam" id="TIGR03591">
    <property type="entry name" value="polynuc_phos"/>
    <property type="match status" value="1"/>
</dbReference>
<dbReference type="NCBIfam" id="NF008805">
    <property type="entry name" value="PRK11824.1"/>
    <property type="match status" value="1"/>
</dbReference>
<dbReference type="PANTHER" id="PTHR11252">
    <property type="entry name" value="POLYRIBONUCLEOTIDE NUCLEOTIDYLTRANSFERASE"/>
    <property type="match status" value="1"/>
</dbReference>
<dbReference type="PANTHER" id="PTHR11252:SF0">
    <property type="entry name" value="POLYRIBONUCLEOTIDE NUCLEOTIDYLTRANSFERASE 1, MITOCHONDRIAL"/>
    <property type="match status" value="1"/>
</dbReference>
<dbReference type="Pfam" id="PF00013">
    <property type="entry name" value="KH_1"/>
    <property type="match status" value="1"/>
</dbReference>
<dbReference type="Pfam" id="PF03726">
    <property type="entry name" value="PNPase"/>
    <property type="match status" value="1"/>
</dbReference>
<dbReference type="Pfam" id="PF01138">
    <property type="entry name" value="RNase_PH"/>
    <property type="match status" value="2"/>
</dbReference>
<dbReference type="Pfam" id="PF03725">
    <property type="entry name" value="RNase_PH_C"/>
    <property type="match status" value="2"/>
</dbReference>
<dbReference type="Pfam" id="PF00575">
    <property type="entry name" value="S1"/>
    <property type="match status" value="1"/>
</dbReference>
<dbReference type="PIRSF" id="PIRSF005499">
    <property type="entry name" value="PNPase"/>
    <property type="match status" value="1"/>
</dbReference>
<dbReference type="SMART" id="SM00322">
    <property type="entry name" value="KH"/>
    <property type="match status" value="1"/>
</dbReference>
<dbReference type="SMART" id="SM00316">
    <property type="entry name" value="S1"/>
    <property type="match status" value="1"/>
</dbReference>
<dbReference type="SUPFAM" id="SSF54791">
    <property type="entry name" value="Eukaryotic type KH-domain (KH-domain type I)"/>
    <property type="match status" value="1"/>
</dbReference>
<dbReference type="SUPFAM" id="SSF50249">
    <property type="entry name" value="Nucleic acid-binding proteins"/>
    <property type="match status" value="1"/>
</dbReference>
<dbReference type="SUPFAM" id="SSF55666">
    <property type="entry name" value="Ribonuclease PH domain 2-like"/>
    <property type="match status" value="2"/>
</dbReference>
<dbReference type="SUPFAM" id="SSF54211">
    <property type="entry name" value="Ribosomal protein S5 domain 2-like"/>
    <property type="match status" value="2"/>
</dbReference>
<dbReference type="PROSITE" id="PS50084">
    <property type="entry name" value="KH_TYPE_1"/>
    <property type="match status" value="1"/>
</dbReference>
<dbReference type="PROSITE" id="PS50126">
    <property type="entry name" value="S1"/>
    <property type="match status" value="1"/>
</dbReference>
<keyword id="KW-0963">Cytoplasm</keyword>
<keyword id="KW-0460">Magnesium</keyword>
<keyword id="KW-0479">Metal-binding</keyword>
<keyword id="KW-0548">Nucleotidyltransferase</keyword>
<keyword id="KW-1185">Reference proteome</keyword>
<keyword id="KW-0694">RNA-binding</keyword>
<keyword id="KW-0808">Transferase</keyword>
<feature type="chain" id="PRO_0000329495" description="Polyribonucleotide nucleotidyltransferase">
    <location>
        <begin position="1"/>
        <end position="706"/>
    </location>
</feature>
<feature type="domain" description="KH" evidence="1">
    <location>
        <begin position="552"/>
        <end position="611"/>
    </location>
</feature>
<feature type="domain" description="S1 motif" evidence="1">
    <location>
        <begin position="621"/>
        <end position="689"/>
    </location>
</feature>
<feature type="binding site" evidence="1">
    <location>
        <position position="485"/>
    </location>
    <ligand>
        <name>Mg(2+)</name>
        <dbReference type="ChEBI" id="CHEBI:18420"/>
    </ligand>
</feature>
<feature type="binding site" evidence="1">
    <location>
        <position position="491"/>
    </location>
    <ligand>
        <name>Mg(2+)</name>
        <dbReference type="ChEBI" id="CHEBI:18420"/>
    </ligand>
</feature>
<proteinExistence type="inferred from homology"/>
<evidence type="ECO:0000255" key="1">
    <source>
        <dbReference type="HAMAP-Rule" id="MF_01595"/>
    </source>
</evidence>
<reference key="1">
    <citation type="submission" date="2007-10" db="EMBL/GenBank/DDBJ databases">
        <title>Complete genome of Alkaliphilus oremlandii OhILAs.</title>
        <authorList>
            <person name="Copeland A."/>
            <person name="Lucas S."/>
            <person name="Lapidus A."/>
            <person name="Barry K."/>
            <person name="Detter J.C."/>
            <person name="Glavina del Rio T."/>
            <person name="Hammon N."/>
            <person name="Israni S."/>
            <person name="Dalin E."/>
            <person name="Tice H."/>
            <person name="Pitluck S."/>
            <person name="Chain P."/>
            <person name="Malfatti S."/>
            <person name="Shin M."/>
            <person name="Vergez L."/>
            <person name="Schmutz J."/>
            <person name="Larimer F."/>
            <person name="Land M."/>
            <person name="Hauser L."/>
            <person name="Kyrpides N."/>
            <person name="Mikhailova N."/>
            <person name="Stolz J.F."/>
            <person name="Dawson A."/>
            <person name="Fisher E."/>
            <person name="Crable B."/>
            <person name="Perera E."/>
            <person name="Lisak J."/>
            <person name="Ranganathan M."/>
            <person name="Basu P."/>
            <person name="Richardson P."/>
        </authorList>
    </citation>
    <scope>NUCLEOTIDE SEQUENCE [LARGE SCALE GENOMIC DNA]</scope>
    <source>
        <strain>OhILAs</strain>
    </source>
</reference>
<name>PNP_ALKOO</name>
<comment type="function">
    <text evidence="1">Involved in mRNA degradation. Catalyzes the phosphorolysis of single-stranded polyribonucleotides processively in the 3'- to 5'-direction.</text>
</comment>
<comment type="catalytic activity">
    <reaction evidence="1">
        <text>RNA(n+1) + phosphate = RNA(n) + a ribonucleoside 5'-diphosphate</text>
        <dbReference type="Rhea" id="RHEA:22096"/>
        <dbReference type="Rhea" id="RHEA-COMP:14527"/>
        <dbReference type="Rhea" id="RHEA-COMP:17342"/>
        <dbReference type="ChEBI" id="CHEBI:43474"/>
        <dbReference type="ChEBI" id="CHEBI:57930"/>
        <dbReference type="ChEBI" id="CHEBI:140395"/>
        <dbReference type="EC" id="2.7.7.8"/>
    </reaction>
</comment>
<comment type="cofactor">
    <cofactor evidence="1">
        <name>Mg(2+)</name>
        <dbReference type="ChEBI" id="CHEBI:18420"/>
    </cofactor>
</comment>
<comment type="subcellular location">
    <subcellularLocation>
        <location evidence="1">Cytoplasm</location>
    </subcellularLocation>
</comment>
<comment type="similarity">
    <text evidence="1">Belongs to the polyribonucleotide nucleotidyltransferase family.</text>
</comment>
<sequence>MFKVFKKEIAGRVLEVEVGKLAQLSNGSCLLKYGQTAVLVNACASKSPREGIDFFPLSVDYEEKMYAAGKIPGGFIKREGRPSENAILTSRLIDRPIRPLFPDGYRNDVQIIATVLSVDIDCTPDIVAMLGSSIALSISDIPFQGPTASVHVGLVDGKLLINPTSDEREHSSLDLVVSGTKDAVMMIEAGANEVTEAQMLEAILFAHEEIKNIISFIEEIAAEVGKEKQEVVTLEINEDFETEVRAYAKTRISEAIRTVEKLERNAKIELANEETINYFYEKYQEELNLKQIHTILDSILKEETRNLILYDKKRPDDRQHDEIRPISCEVDLLPKTHGSGLFTRGQTQVLSIVTLGAIGDVQILDGLGKEESKRYMHHYNFPPYSVGETKMLRSPGRREIGHGALAERALEPMIPSQDDFPYAIRVVSEVLASNGSSSQASVCGSTLSLLDAGVPLKDMVAGIAMGLVKEGDAVAILSDIQGMEDHLGDMDFKVAGTAKGITAIQMDIKIKGIDEPILKDALEQARVGRLYILDKMKEAISSPRPELSPYAPRMLKMKIHPDKIREVIGSGGKTINKIIEDTGVKIDIENDGTIFIAAQTQEAGELALSIINNIVREPEIGDIFKGKVIKLMNFGAFVEILPGKEGLVHISNLAHERVNKVEDVLAVGDEIDVKVIEIDQQGKVSLSRKALLPKDNDKKQDDPQKA</sequence>